<accession>Q803I8</accession>
<accession>Q6NYA5</accession>
<sequence length="625" mass="68757">MVRAALVTATSLALTGAVVAHAYFLKHQFYPTVVYLTKSSPSMAVLYIQAFVLVFLLGKLMRKVFFGQLRAAEMEHLIERSWYAVTETCLAFTVFRDDFSPRFVALFTLLLFLKCFHWLAEDRVDFMERSPNISWVFHFRVLSLMVLLGVMDFLFVNHACHSIITRGASVQLVFGFEYAILMTMVLTTFIKYTLHTIDLQSENPWDNKAVYMLYTELFTGFIKVLLYMAFMTIMIKVHTFPLFAIRPMYLAMRQFKKAVTDAIMSRRAIRNMNTLYPDATPEDLQATDNVCIICREEMVTGAKKLPCNHIFHSSCLRSWFQRQQTCPTCRMDVLRASQPNQTPAPPAAQAPAPPAPANAPIPPPVNVAPGMIPQFPPGLFPFWGPFPGAPPPAVPGAPAAPTDTPQPSSDGAQGAESGAGGLAQSTAEAASAAPGAMPGFPFTMPPPFPSAPWLPMPPPPPFMSSMPPPPSSLSSMSEAELRELEQEGRRGLEARLQCLHNIHTLLDAAMLNIHHYLSTVATLSPPRSETNTGETSESANVESSPSTANTETAGQEIQSQSGESINGAAGFSQPDSTTEGEKDVKEEDEDDGEPSAAELRRRRLRKLETTNTPDHGNLLKLASVN</sequence>
<organism>
    <name type="scientific">Danio rerio</name>
    <name type="common">Zebrafish</name>
    <name type="synonym">Brachydanio rerio</name>
    <dbReference type="NCBI Taxonomy" id="7955"/>
    <lineage>
        <taxon>Eukaryota</taxon>
        <taxon>Metazoa</taxon>
        <taxon>Chordata</taxon>
        <taxon>Craniata</taxon>
        <taxon>Vertebrata</taxon>
        <taxon>Euteleostomi</taxon>
        <taxon>Actinopterygii</taxon>
        <taxon>Neopterygii</taxon>
        <taxon>Teleostei</taxon>
        <taxon>Ostariophysi</taxon>
        <taxon>Cypriniformes</taxon>
        <taxon>Danionidae</taxon>
        <taxon>Danioninae</taxon>
        <taxon>Danio</taxon>
    </lineage>
</organism>
<gene>
    <name type="primary">syvn1</name>
    <name type="synonym">hrd1</name>
    <name type="ORF">zgc:55735</name>
    <name type="ORF">zgc:77108</name>
</gene>
<protein>
    <recommendedName>
        <fullName>E3 ubiquitin-protein ligase synoviolin</fullName>
        <ecNumber evidence="2">2.3.2.27</ecNumber>
    </recommendedName>
    <alternativeName>
        <fullName evidence="6">RING-type E3 ubiquitin transferase synoviolin</fullName>
    </alternativeName>
    <alternativeName>
        <fullName>Synovial apoptosis inhibitor 1</fullName>
    </alternativeName>
</protein>
<proteinExistence type="evidence at transcript level"/>
<feature type="chain" id="PRO_0000280550" description="E3 ubiquitin-protein ligase synoviolin">
    <location>
        <begin position="1"/>
        <end position="625"/>
    </location>
</feature>
<feature type="topological domain" description="Cytoplasmic" evidence="6">
    <location>
        <begin position="1"/>
        <end position="4"/>
    </location>
</feature>
<feature type="transmembrane region" description="Helical" evidence="3">
    <location>
        <begin position="5"/>
        <end position="25"/>
    </location>
</feature>
<feature type="topological domain" description="Lumenal" evidence="6">
    <location>
        <begin position="26"/>
        <end position="40"/>
    </location>
</feature>
<feature type="transmembrane region" description="Helical" evidence="3">
    <location>
        <begin position="41"/>
        <end position="61"/>
    </location>
</feature>
<feature type="topological domain" description="Cytoplasmic" evidence="6">
    <location>
        <begin position="62"/>
        <end position="98"/>
    </location>
</feature>
<feature type="transmembrane region" description="Helical" evidence="3">
    <location>
        <begin position="99"/>
        <end position="119"/>
    </location>
</feature>
<feature type="topological domain" description="Lumenal" evidence="6">
    <location>
        <begin position="120"/>
        <end position="135"/>
    </location>
</feature>
<feature type="transmembrane region" description="Helical" evidence="3">
    <location>
        <begin position="136"/>
        <end position="156"/>
    </location>
</feature>
<feature type="topological domain" description="Cytoplasmic" evidence="6">
    <location>
        <begin position="157"/>
        <end position="169"/>
    </location>
</feature>
<feature type="transmembrane region" description="Helical" evidence="3">
    <location>
        <begin position="170"/>
        <end position="190"/>
    </location>
</feature>
<feature type="topological domain" description="Lumenal" evidence="6">
    <location>
        <begin position="191"/>
        <end position="212"/>
    </location>
</feature>
<feature type="transmembrane region" description="Helical" evidence="3">
    <location>
        <begin position="213"/>
        <end position="235"/>
    </location>
</feature>
<feature type="topological domain" description="Cytoplasmic" evidence="6">
    <location>
        <begin position="236"/>
        <end position="625"/>
    </location>
</feature>
<feature type="zinc finger region" description="RING-type; atypical" evidence="4">
    <location>
        <begin position="291"/>
        <end position="330"/>
    </location>
</feature>
<feature type="region of interest" description="Interaction with p53/TP53" evidence="1">
    <location>
        <begin position="236"/>
        <end position="270"/>
    </location>
</feature>
<feature type="region of interest" description="Disordered" evidence="5">
    <location>
        <begin position="337"/>
        <end position="361"/>
    </location>
</feature>
<feature type="region of interest" description="Disordered" evidence="5">
    <location>
        <begin position="390"/>
        <end position="434"/>
    </location>
</feature>
<feature type="region of interest" description="Disordered" evidence="5">
    <location>
        <begin position="462"/>
        <end position="487"/>
    </location>
</feature>
<feature type="region of interest" description="Disordered" evidence="5">
    <location>
        <begin position="523"/>
        <end position="625"/>
    </location>
</feature>
<feature type="compositionally biased region" description="Pro residues" evidence="5">
    <location>
        <begin position="342"/>
        <end position="361"/>
    </location>
</feature>
<feature type="compositionally biased region" description="Low complexity" evidence="5">
    <location>
        <begin position="423"/>
        <end position="434"/>
    </location>
</feature>
<feature type="compositionally biased region" description="Pro residues" evidence="5">
    <location>
        <begin position="462"/>
        <end position="471"/>
    </location>
</feature>
<feature type="compositionally biased region" description="Polar residues" evidence="5">
    <location>
        <begin position="523"/>
        <end position="564"/>
    </location>
</feature>
<feature type="binding site" evidence="2">
    <location>
        <position position="291"/>
    </location>
    <ligand>
        <name>Zn(2+)</name>
        <dbReference type="ChEBI" id="CHEBI:29105"/>
        <label>1</label>
    </ligand>
</feature>
<feature type="binding site" evidence="2">
    <location>
        <position position="294"/>
    </location>
    <ligand>
        <name>Zn(2+)</name>
        <dbReference type="ChEBI" id="CHEBI:29105"/>
        <label>1</label>
    </ligand>
</feature>
<feature type="binding site" evidence="2">
    <location>
        <position position="307"/>
    </location>
    <ligand>
        <name>Zn(2+)</name>
        <dbReference type="ChEBI" id="CHEBI:29105"/>
        <label>2</label>
    </ligand>
</feature>
<feature type="binding site" evidence="2">
    <location>
        <position position="309"/>
    </location>
    <ligand>
        <name>Zn(2+)</name>
        <dbReference type="ChEBI" id="CHEBI:29105"/>
        <label>2</label>
    </ligand>
</feature>
<feature type="binding site" evidence="2">
    <location>
        <position position="312"/>
    </location>
    <ligand>
        <name>Zn(2+)</name>
        <dbReference type="ChEBI" id="CHEBI:29105"/>
        <label>1</label>
    </ligand>
</feature>
<feature type="binding site" evidence="2">
    <location>
        <position position="315"/>
    </location>
    <ligand>
        <name>Zn(2+)</name>
        <dbReference type="ChEBI" id="CHEBI:29105"/>
        <label>1</label>
    </ligand>
</feature>
<feature type="binding site" evidence="2">
    <location>
        <position position="326"/>
    </location>
    <ligand>
        <name>Zn(2+)</name>
        <dbReference type="ChEBI" id="CHEBI:29105"/>
        <label>2</label>
    </ligand>
</feature>
<feature type="binding site" evidence="2">
    <location>
        <position position="329"/>
    </location>
    <ligand>
        <name>Zn(2+)</name>
        <dbReference type="ChEBI" id="CHEBI:29105"/>
        <label>2</label>
    </ligand>
</feature>
<feature type="sequence conflict" description="In Ref. 1; AAH66677." evidence="6" ref="1">
    <original>I</original>
    <variation>M</variation>
    <location>
        <position position="372"/>
    </location>
</feature>
<feature type="sequence conflict" description="In Ref. 1; AAH66677." evidence="6" ref="1">
    <original>D</original>
    <variation>E</variation>
    <location>
        <position position="410"/>
    </location>
</feature>
<feature type="sequence conflict" description="In Ref. 1; AAH66677." evidence="6" ref="1">
    <original>E</original>
    <variation>D</variation>
    <location>
        <position position="428"/>
    </location>
</feature>
<feature type="sequence conflict" description="In Ref. 1; AAH66677." evidence="6" ref="1">
    <original>K</original>
    <variation>R</variation>
    <location>
        <position position="582"/>
    </location>
</feature>
<dbReference type="EC" id="2.3.2.27" evidence="2"/>
<dbReference type="EMBL" id="BC044465">
    <property type="protein sequence ID" value="AAH44465.1"/>
    <property type="status" value="ALT_FRAME"/>
    <property type="molecule type" value="mRNA"/>
</dbReference>
<dbReference type="EMBL" id="BC066677">
    <property type="protein sequence ID" value="AAH66677.1"/>
    <property type="molecule type" value="mRNA"/>
</dbReference>
<dbReference type="SMR" id="Q803I8"/>
<dbReference type="FunCoup" id="Q803I8">
    <property type="interactions" value="1471"/>
</dbReference>
<dbReference type="STRING" id="7955.ENSDARP00000116575"/>
<dbReference type="PaxDb" id="7955-ENSDARP00000100101"/>
<dbReference type="AGR" id="ZFIN:ZDB-GENE-030131-7166"/>
<dbReference type="ZFIN" id="ZDB-GENE-030131-7166">
    <property type="gene designation" value="syvn1"/>
</dbReference>
<dbReference type="eggNOG" id="KOG0802">
    <property type="taxonomic scope" value="Eukaryota"/>
</dbReference>
<dbReference type="InParanoid" id="Q803I8"/>
<dbReference type="PhylomeDB" id="Q803I8"/>
<dbReference type="Reactome" id="R-DRE-5358346">
    <property type="pathway name" value="Hedgehog ligand biogenesis"/>
</dbReference>
<dbReference type="UniPathway" id="UPA00143"/>
<dbReference type="PRO" id="PR:Q803I8"/>
<dbReference type="Proteomes" id="UP000000437">
    <property type="component" value="Unplaced"/>
</dbReference>
<dbReference type="GO" id="GO:0012505">
    <property type="term" value="C:endomembrane system"/>
    <property type="evidence" value="ECO:0000318"/>
    <property type="project" value="GO_Central"/>
</dbReference>
<dbReference type="GO" id="GO:0005789">
    <property type="term" value="C:endoplasmic reticulum membrane"/>
    <property type="evidence" value="ECO:0007669"/>
    <property type="project" value="UniProtKB-SubCell"/>
</dbReference>
<dbReference type="GO" id="GO:0044322">
    <property type="term" value="C:endoplasmic reticulum quality control compartment"/>
    <property type="evidence" value="ECO:0000318"/>
    <property type="project" value="GO_Central"/>
</dbReference>
<dbReference type="GO" id="GO:0061630">
    <property type="term" value="F:ubiquitin protein ligase activity"/>
    <property type="evidence" value="ECO:0000250"/>
    <property type="project" value="UniProtKB"/>
</dbReference>
<dbReference type="GO" id="GO:0008270">
    <property type="term" value="F:zinc ion binding"/>
    <property type="evidence" value="ECO:0007669"/>
    <property type="project" value="UniProtKB-KW"/>
</dbReference>
<dbReference type="GO" id="GO:0036503">
    <property type="term" value="P:ERAD pathway"/>
    <property type="evidence" value="ECO:0000250"/>
    <property type="project" value="UniProtKB"/>
</dbReference>
<dbReference type="GO" id="GO:0043161">
    <property type="term" value="P:proteasome-mediated ubiquitin-dependent protein catabolic process"/>
    <property type="evidence" value="ECO:0000318"/>
    <property type="project" value="GO_Central"/>
</dbReference>
<dbReference type="GO" id="GO:0016567">
    <property type="term" value="P:protein ubiquitination"/>
    <property type="evidence" value="ECO:0007669"/>
    <property type="project" value="UniProtKB-UniPathway"/>
</dbReference>
<dbReference type="GO" id="GO:0006511">
    <property type="term" value="P:ubiquitin-dependent protein catabolic process"/>
    <property type="evidence" value="ECO:0000250"/>
    <property type="project" value="UniProtKB"/>
</dbReference>
<dbReference type="CDD" id="cd16479">
    <property type="entry name" value="RING-H2_synoviolin"/>
    <property type="match status" value="1"/>
</dbReference>
<dbReference type="FunFam" id="3.30.40.10:FF:000088">
    <property type="entry name" value="E3 ubiquitin-protein ligase synoviolin"/>
    <property type="match status" value="1"/>
</dbReference>
<dbReference type="Gene3D" id="3.30.40.10">
    <property type="entry name" value="Zinc/RING finger domain, C3HC4 (zinc finger)"/>
    <property type="match status" value="1"/>
</dbReference>
<dbReference type="InterPro" id="IPR050731">
    <property type="entry name" value="HRD1_E3_ubiq-ligases"/>
</dbReference>
<dbReference type="InterPro" id="IPR001841">
    <property type="entry name" value="Znf_RING"/>
</dbReference>
<dbReference type="InterPro" id="IPR013083">
    <property type="entry name" value="Znf_RING/FYVE/PHD"/>
</dbReference>
<dbReference type="PANTHER" id="PTHR22763:SF184">
    <property type="entry name" value="E3 UBIQUITIN-PROTEIN LIGASE SYNOVIOLIN"/>
    <property type="match status" value="1"/>
</dbReference>
<dbReference type="PANTHER" id="PTHR22763">
    <property type="entry name" value="RING ZINC FINGER PROTEIN"/>
    <property type="match status" value="1"/>
</dbReference>
<dbReference type="Pfam" id="PF13639">
    <property type="entry name" value="zf-RING_2"/>
    <property type="match status" value="1"/>
</dbReference>
<dbReference type="SMART" id="SM00184">
    <property type="entry name" value="RING"/>
    <property type="match status" value="1"/>
</dbReference>
<dbReference type="SUPFAM" id="SSF57850">
    <property type="entry name" value="RING/U-box"/>
    <property type="match status" value="1"/>
</dbReference>
<dbReference type="PROSITE" id="PS50089">
    <property type="entry name" value="ZF_RING_2"/>
    <property type="match status" value="1"/>
</dbReference>
<reference key="1">
    <citation type="submission" date="2003-01" db="EMBL/GenBank/DDBJ databases">
        <authorList>
            <consortium name="NIH - Zebrafish Gene Collection (ZGC) project"/>
        </authorList>
    </citation>
    <scope>NUCLEOTIDE SEQUENCE [LARGE SCALE MRNA]</scope>
    <source>
        <strain>AB</strain>
        <tissue>Kidney</tissue>
    </source>
</reference>
<evidence type="ECO:0000250" key="1"/>
<evidence type="ECO:0000250" key="2">
    <source>
        <dbReference type="UniProtKB" id="Q86TM6"/>
    </source>
</evidence>
<evidence type="ECO:0000255" key="3"/>
<evidence type="ECO:0000255" key="4">
    <source>
        <dbReference type="PROSITE-ProRule" id="PRU00175"/>
    </source>
</evidence>
<evidence type="ECO:0000256" key="5">
    <source>
        <dbReference type="SAM" id="MobiDB-lite"/>
    </source>
</evidence>
<evidence type="ECO:0000305" key="6"/>
<name>SYVN1_DANRE</name>
<comment type="function">
    <text evidence="2">E3 ubiquitin-protein ligase which accepts ubiquitin specifically from endoplasmic reticulum-associated UBC7 E2 ligase and transfers it to substrates, promoting their degradation. Component of the endoplasmic reticulum quality control (ERQC) system also called ER-associated degradation (ERAD) involved in ubiquitin-dependent degradation of misfolded endoplasmic reticulum proteins. Also promotes the degradation of normal but naturally short-lived proteins. Protects cells from ER stress-induced apoptosis. Sequesters p53 in the cytoplasm and promotes its degradation, thereby negatively regulating its biological function in transcription, cell cycle regulation and apoptosis (By similarity).</text>
</comment>
<comment type="catalytic activity">
    <reaction evidence="2">
        <text>S-ubiquitinyl-[E2 ubiquitin-conjugating enzyme]-L-cysteine + [acceptor protein]-L-lysine = [E2 ubiquitin-conjugating enzyme]-L-cysteine + N(6)-ubiquitinyl-[acceptor protein]-L-lysine.</text>
        <dbReference type="EC" id="2.3.2.27"/>
    </reaction>
</comment>
<comment type="pathway">
    <text>Protein modification; protein ubiquitination.</text>
</comment>
<comment type="subunit">
    <text evidence="2">Homodimer.</text>
</comment>
<comment type="subcellular location">
    <subcellularLocation>
        <location evidence="1">Endoplasmic reticulum membrane</location>
        <topology evidence="2">Multi-pass membrane protein</topology>
    </subcellularLocation>
</comment>
<comment type="domain">
    <text evidence="1">The RING-type zinc finger is required for E3 ligase activity.</text>
</comment>
<comment type="similarity">
    <text evidence="6">Belongs to the HRD1 family.</text>
</comment>
<comment type="sequence caution" evidence="6">
    <conflict type="frameshift">
        <sequence resource="EMBL-CDS" id="AAH44465"/>
    </conflict>
</comment>
<keyword id="KW-0256">Endoplasmic reticulum</keyword>
<keyword id="KW-0472">Membrane</keyword>
<keyword id="KW-0479">Metal-binding</keyword>
<keyword id="KW-1185">Reference proteome</keyword>
<keyword id="KW-0808">Transferase</keyword>
<keyword id="KW-0812">Transmembrane</keyword>
<keyword id="KW-1133">Transmembrane helix</keyword>
<keyword id="KW-0833">Ubl conjugation pathway</keyword>
<keyword id="KW-0862">Zinc</keyword>
<keyword id="KW-0863">Zinc-finger</keyword>